<dbReference type="EMBL" id="U30821">
    <property type="protein sequence ID" value="AAA81281.1"/>
    <property type="molecule type" value="Genomic_DNA"/>
</dbReference>
<dbReference type="PIR" id="T06938">
    <property type="entry name" value="T06938"/>
</dbReference>
<dbReference type="RefSeq" id="NP_043250.1">
    <property type="nucleotide sequence ID" value="NC_001675.1"/>
</dbReference>
<dbReference type="SMR" id="P48107"/>
<dbReference type="GeneID" id="801559"/>
<dbReference type="GO" id="GO:0033115">
    <property type="term" value="C:cyanelle thylakoid membrane"/>
    <property type="evidence" value="ECO:0007669"/>
    <property type="project" value="UniProtKB-SubCell"/>
</dbReference>
<dbReference type="GO" id="GO:0009523">
    <property type="term" value="C:photosystem II"/>
    <property type="evidence" value="ECO:0007669"/>
    <property type="project" value="UniProtKB-KW"/>
</dbReference>
<dbReference type="GO" id="GO:0019684">
    <property type="term" value="P:photosynthesis, light reaction"/>
    <property type="evidence" value="ECO:0007669"/>
    <property type="project" value="InterPro"/>
</dbReference>
<dbReference type="HAMAP" id="MF_00438">
    <property type="entry name" value="PSII_PsbM"/>
    <property type="match status" value="1"/>
</dbReference>
<dbReference type="InterPro" id="IPR007826">
    <property type="entry name" value="PSII_PsbM"/>
</dbReference>
<dbReference type="InterPro" id="IPR037269">
    <property type="entry name" value="PSII_PsbM_sf"/>
</dbReference>
<dbReference type="NCBIfam" id="TIGR03038">
    <property type="entry name" value="PS_II_psbM"/>
    <property type="match status" value="1"/>
</dbReference>
<dbReference type="PANTHER" id="PTHR35774">
    <property type="entry name" value="PHOTOSYSTEM II REACTION CENTER PROTEIN M"/>
    <property type="match status" value="1"/>
</dbReference>
<dbReference type="PANTHER" id="PTHR35774:SF1">
    <property type="entry name" value="PHOTOSYSTEM II REACTION CENTER PROTEIN M"/>
    <property type="match status" value="1"/>
</dbReference>
<dbReference type="Pfam" id="PF05151">
    <property type="entry name" value="PsbM"/>
    <property type="match status" value="1"/>
</dbReference>
<dbReference type="SUPFAM" id="SSF161033">
    <property type="entry name" value="Photosystem II reaction center protein M, PsbM"/>
    <property type="match status" value="1"/>
</dbReference>
<accession>P48107</accession>
<keyword id="KW-0194">Cyanelle</keyword>
<keyword id="KW-0472">Membrane</keyword>
<keyword id="KW-0602">Photosynthesis</keyword>
<keyword id="KW-0604">Photosystem II</keyword>
<keyword id="KW-0934">Plastid</keyword>
<keyword id="KW-0674">Reaction center</keyword>
<keyword id="KW-0793">Thylakoid</keyword>
<keyword id="KW-0812">Transmembrane</keyword>
<keyword id="KW-1133">Transmembrane helix</keyword>
<protein>
    <recommendedName>
        <fullName evidence="1">Photosystem II reaction center protein M</fullName>
        <shortName evidence="1">PSII-M</shortName>
    </recommendedName>
</protein>
<comment type="function">
    <text evidence="1">One of the components of the core complex of photosystem II (PSII). PSII is a light-driven water:plastoquinone oxidoreductase that uses light energy to abstract electrons from H(2)O, generating O(2) and a proton gradient subsequently used for ATP formation. It consists of a core antenna complex that captures photons, and an electron transfer chain that converts photonic excitation into a charge separation. This subunit is found at the monomer-monomer interface.</text>
</comment>
<comment type="subunit">
    <text evidence="1">PSII is composed of 1 copy each of membrane proteins PsbA, PsbB, PsbC, PsbD, PsbE, PsbF, PsbH, PsbI, PsbJ, PsbK, PsbL, PsbM, PsbT, PsbX, PsbY, PsbZ, Psb30/Ycf12, at least 3 peripheral proteins of the oxygen-evolving complex and a large number of cofactors. It forms dimeric complexes.</text>
</comment>
<comment type="subcellular location">
    <subcellularLocation>
        <location evidence="1">Plastid</location>
        <location evidence="1">Cyanelle thylakoid membrane</location>
        <topology evidence="1">Single-pass membrane protein</topology>
    </subcellularLocation>
</comment>
<comment type="similarity">
    <text evidence="1">Belongs to the PsbM family.</text>
</comment>
<geneLocation type="cyanelle"/>
<evidence type="ECO:0000255" key="1">
    <source>
        <dbReference type="HAMAP-Rule" id="MF_00438"/>
    </source>
</evidence>
<organism>
    <name type="scientific">Cyanophora paradoxa</name>
    <dbReference type="NCBI Taxonomy" id="2762"/>
    <lineage>
        <taxon>Eukaryota</taxon>
        <taxon>Glaucocystophyceae</taxon>
        <taxon>Cyanophoraceae</taxon>
        <taxon>Cyanophora</taxon>
    </lineage>
</organism>
<reference key="1">
    <citation type="journal article" date="1995" name="Plant Mol. Biol. Rep.">
        <title>Nucleotide sequence of the cyanelle DNA from Cyanophora paradoxa.</title>
        <authorList>
            <person name="Stirewalt V.L."/>
            <person name="Michalowski C.B."/>
            <person name="Loeffelhardt W."/>
            <person name="Bohnert H.J."/>
            <person name="Bryant D.A."/>
        </authorList>
    </citation>
    <scope>NUCLEOTIDE SEQUENCE [LARGE SCALE GENOMIC DNA]</scope>
    <source>
        <strain>UTEX LB 555 / Pringsheim</strain>
    </source>
</reference>
<reference key="2">
    <citation type="book" date="1997" name="Eukaryotism and symbiosis">
        <title>The complete sequence of the cyanelle genome of Cyanophora paradoxa: the genetic complexity of a primitive plastid.</title>
        <editorList>
            <person name="Schenk H.E.A."/>
            <person name="Herrmann R."/>
            <person name="Jeon K.W."/>
            <person name="Mueller N.E."/>
            <person name="Schwemmler W."/>
        </editorList>
        <authorList>
            <person name="Loeffelhardt W."/>
            <person name="Stirewalt V.L."/>
            <person name="Michalowski C.B."/>
            <person name="Annarella M."/>
            <person name="Farley J.Y."/>
            <person name="Schluchter W.M."/>
            <person name="Chung S."/>
            <person name="Newmann-Spallart C."/>
            <person name="Steiner J.M."/>
            <person name="Jakowitsch J."/>
            <person name="Bohnert H.J."/>
            <person name="Bryant D.A."/>
        </authorList>
    </citation>
    <scope>NUCLEOTIDE SEQUENCE [LARGE SCALE GENOMIC DNA]</scope>
    <source>
        <strain>UTEX LB 555 / Pringsheim</strain>
    </source>
</reference>
<feature type="chain" id="PRO_0000217555" description="Photosystem II reaction center protein M">
    <location>
        <begin position="1"/>
        <end position="38"/>
    </location>
</feature>
<feature type="transmembrane region" description="Helical" evidence="1">
    <location>
        <begin position="5"/>
        <end position="25"/>
    </location>
</feature>
<sequence>MEVNILGLIATALFIVIPTSFLLILYIQTVASAKQQEQ</sequence>
<gene>
    <name evidence="1" type="primary">psbM</name>
</gene>
<proteinExistence type="inferred from homology"/>
<name>PSBM_CYAPA</name>